<sequence length="407" mass="46402">MSGGSADYNREHGGPEGMDPDGVIESNWNEIVDNFDDMNLKESLLRGIYAYGFEKPSAIQQRAIIPCIKGYDVIAQAQSGTGKTATFAISILQQLEIEFKETQALVLAPTRELAQQIQKVILALGDYMGATCHACIGGTNVRNEMQKLQAEAPHIVVGTPGRVFDMLNRRYLSPKWIKMFVLDEADEMLSRGFKDQIYEIFQKLNTSIQVVLLSATMPTDVLEVTKKFMRDPIRILVKKEELTLEGIKQFYINVEREEWKLDTLCDLYETLTITQAVIFLNTRRKVDWLTEKMHARDFTVSALHGDMDQKERDVIMREFRSGSSRVLITTDLLARGIDVQQVSLVINYDLPTNRENYIHRIGRGGRFGRKGVAINFVTEEDKRILRDIETFYNTTVEEMPMNVADLI</sequence>
<organism>
    <name type="scientific">Bos taurus</name>
    <name type="common">Bovine</name>
    <dbReference type="NCBI Taxonomy" id="9913"/>
    <lineage>
        <taxon>Eukaryota</taxon>
        <taxon>Metazoa</taxon>
        <taxon>Chordata</taxon>
        <taxon>Craniata</taxon>
        <taxon>Vertebrata</taxon>
        <taxon>Euteleostomi</taxon>
        <taxon>Mammalia</taxon>
        <taxon>Eutheria</taxon>
        <taxon>Laurasiatheria</taxon>
        <taxon>Artiodactyla</taxon>
        <taxon>Ruminantia</taxon>
        <taxon>Pecora</taxon>
        <taxon>Bovidae</taxon>
        <taxon>Bovinae</taxon>
        <taxon>Bos</taxon>
    </lineage>
</organism>
<keyword id="KW-0067">ATP-binding</keyword>
<keyword id="KW-0347">Helicase</keyword>
<keyword id="KW-0378">Hydrolase</keyword>
<keyword id="KW-0396">Initiation factor</keyword>
<keyword id="KW-0547">Nucleotide-binding</keyword>
<keyword id="KW-0597">Phosphoprotein</keyword>
<keyword id="KW-0648">Protein biosynthesis</keyword>
<keyword id="KW-1185">Reference proteome</keyword>
<keyword id="KW-0694">RNA-binding</keyword>
<proteinExistence type="evidence at transcript level"/>
<name>IF4A2_BOVIN</name>
<feature type="chain" id="PRO_0000244560" description="Eukaryotic initiation factor 4A-II">
    <location>
        <begin position="1"/>
        <end position="407"/>
    </location>
</feature>
<feature type="domain" description="Helicase ATP-binding" evidence="3">
    <location>
        <begin position="64"/>
        <end position="235"/>
    </location>
</feature>
<feature type="domain" description="Helicase C-terminal" evidence="4">
    <location>
        <begin position="246"/>
        <end position="407"/>
    </location>
</feature>
<feature type="region of interest" description="Disordered" evidence="5">
    <location>
        <begin position="1"/>
        <end position="22"/>
    </location>
</feature>
<feature type="short sequence motif" description="Q motif">
    <location>
        <begin position="33"/>
        <end position="61"/>
    </location>
</feature>
<feature type="short sequence motif" description="DEAD box">
    <location>
        <begin position="183"/>
        <end position="186"/>
    </location>
</feature>
<feature type="binding site" evidence="3">
    <location>
        <begin position="77"/>
        <end position="84"/>
    </location>
    <ligand>
        <name>ATP</name>
        <dbReference type="ChEBI" id="CHEBI:30616"/>
    </ligand>
</feature>
<feature type="modified residue" description="Phosphothreonine" evidence="2">
    <location>
        <position position="159"/>
    </location>
</feature>
<protein>
    <recommendedName>
        <fullName>Eukaryotic initiation factor 4A-II</fullName>
        <shortName>eIF-4A-II</shortName>
        <shortName>eIF4A-II</shortName>
        <ecNumber>3.6.4.13</ecNumber>
    </recommendedName>
    <alternativeName>
        <fullName>ATP-dependent RNA helicase eIF4A-2</fullName>
    </alternativeName>
</protein>
<comment type="function">
    <text evidence="1">ATP-dependent RNA helicase which is a subunit of the eIF4F complex involved in cap recognition and is required for mRNA binding to ribosome. In the current model of translation initiation, eIF4A unwinds RNA secondary structures in the 5'-UTR of mRNAs which is necessary to allow efficient binding of the small ribosomal subunit, and subsequent scanning for the initiator codon (By similarity).</text>
</comment>
<comment type="catalytic activity">
    <reaction>
        <text>ATP + H2O = ADP + phosphate + H(+)</text>
        <dbReference type="Rhea" id="RHEA:13065"/>
        <dbReference type="ChEBI" id="CHEBI:15377"/>
        <dbReference type="ChEBI" id="CHEBI:15378"/>
        <dbReference type="ChEBI" id="CHEBI:30616"/>
        <dbReference type="ChEBI" id="CHEBI:43474"/>
        <dbReference type="ChEBI" id="CHEBI:456216"/>
        <dbReference type="EC" id="3.6.4.13"/>
    </reaction>
</comment>
<comment type="subunit">
    <text evidence="1">eIF4F is a multi-subunit complex, the composition of which varies with external and internal environmental conditions. It is composed of at least EIF4A, EIF4E and EIF4G1/EIFFG3 (By similarity). Interacts with EIF4E. May interact with NOM1 (By similarity).</text>
</comment>
<comment type="similarity">
    <text evidence="6">Belongs to the DEAD box helicase family. eIF4A subfamily.</text>
</comment>
<evidence type="ECO:0000250" key="1"/>
<evidence type="ECO:0000250" key="2">
    <source>
        <dbReference type="UniProtKB" id="Q14240"/>
    </source>
</evidence>
<evidence type="ECO:0000255" key="3">
    <source>
        <dbReference type="PROSITE-ProRule" id="PRU00541"/>
    </source>
</evidence>
<evidence type="ECO:0000255" key="4">
    <source>
        <dbReference type="PROSITE-ProRule" id="PRU00542"/>
    </source>
</evidence>
<evidence type="ECO:0000256" key="5">
    <source>
        <dbReference type="SAM" id="MobiDB-lite"/>
    </source>
</evidence>
<evidence type="ECO:0000305" key="6"/>
<accession>Q3SZ65</accession>
<gene>
    <name type="primary">EIF4A2</name>
</gene>
<reference key="1">
    <citation type="submission" date="2005-08" db="EMBL/GenBank/DDBJ databases">
        <authorList>
            <consortium name="NIH - Mammalian Gene Collection (MGC) project"/>
        </authorList>
    </citation>
    <scope>NUCLEOTIDE SEQUENCE [LARGE SCALE MRNA]</scope>
    <source>
        <strain>Hereford</strain>
        <tissue>Heart ventricle</tissue>
    </source>
</reference>
<dbReference type="EC" id="3.6.4.13"/>
<dbReference type="EMBL" id="BC103106">
    <property type="protein sequence ID" value="AAI03107.1"/>
    <property type="molecule type" value="mRNA"/>
</dbReference>
<dbReference type="RefSeq" id="NP_001029216.1">
    <property type="nucleotide sequence ID" value="NM_001034044.2"/>
</dbReference>
<dbReference type="SMR" id="Q3SZ65"/>
<dbReference type="FunCoup" id="Q3SZ65">
    <property type="interactions" value="3700"/>
</dbReference>
<dbReference type="STRING" id="9913.ENSBTAP00000019596"/>
<dbReference type="PaxDb" id="9913-ENSBTAP00000019596"/>
<dbReference type="PeptideAtlas" id="Q3SZ65"/>
<dbReference type="GeneID" id="286819"/>
<dbReference type="KEGG" id="bta:286819"/>
<dbReference type="CTD" id="1974"/>
<dbReference type="VEuPathDB" id="HostDB:ENSBTAG00000014724"/>
<dbReference type="eggNOG" id="KOG0327">
    <property type="taxonomic scope" value="Eukaryota"/>
</dbReference>
<dbReference type="HOGENOM" id="CLU_003041_1_0_1"/>
<dbReference type="InParanoid" id="Q3SZ65"/>
<dbReference type="OMA" id="FGCQALV"/>
<dbReference type="OrthoDB" id="10265785at2759"/>
<dbReference type="TreeFam" id="TF101524"/>
<dbReference type="Proteomes" id="UP000009136">
    <property type="component" value="Chromosome 1"/>
</dbReference>
<dbReference type="Bgee" id="ENSBTAG00000014724">
    <property type="expression patterns" value="Expressed in occipital lobe and 103 other cell types or tissues"/>
</dbReference>
<dbReference type="GO" id="GO:0005524">
    <property type="term" value="F:ATP binding"/>
    <property type="evidence" value="ECO:0007669"/>
    <property type="project" value="UniProtKB-KW"/>
</dbReference>
<dbReference type="GO" id="GO:0016887">
    <property type="term" value="F:ATP hydrolysis activity"/>
    <property type="evidence" value="ECO:0007669"/>
    <property type="project" value="RHEA"/>
</dbReference>
<dbReference type="GO" id="GO:0003729">
    <property type="term" value="F:mRNA binding"/>
    <property type="evidence" value="ECO:0000318"/>
    <property type="project" value="GO_Central"/>
</dbReference>
<dbReference type="GO" id="GO:0003724">
    <property type="term" value="F:RNA helicase activity"/>
    <property type="evidence" value="ECO:0000318"/>
    <property type="project" value="GO_Central"/>
</dbReference>
<dbReference type="GO" id="GO:0003743">
    <property type="term" value="F:translation initiation factor activity"/>
    <property type="evidence" value="ECO:0007669"/>
    <property type="project" value="UniProtKB-KW"/>
</dbReference>
<dbReference type="CDD" id="cd18046">
    <property type="entry name" value="DEADc_EIF4AII_EIF4AI_DDX2"/>
    <property type="match status" value="1"/>
</dbReference>
<dbReference type="CDD" id="cd18787">
    <property type="entry name" value="SF2_C_DEAD"/>
    <property type="match status" value="1"/>
</dbReference>
<dbReference type="FunFam" id="3.40.50.300:FF:000089">
    <property type="entry name" value="Eukaryotic initiation factor 4A-II"/>
    <property type="match status" value="1"/>
</dbReference>
<dbReference type="FunFam" id="3.40.50.300:FF:000031">
    <property type="entry name" value="Eukaryotic initiation factor 4A-III"/>
    <property type="match status" value="1"/>
</dbReference>
<dbReference type="Gene3D" id="3.40.50.300">
    <property type="entry name" value="P-loop containing nucleotide triphosphate hydrolases"/>
    <property type="match status" value="2"/>
</dbReference>
<dbReference type="InterPro" id="IPR011545">
    <property type="entry name" value="DEAD/DEAH_box_helicase_dom"/>
</dbReference>
<dbReference type="InterPro" id="IPR044728">
    <property type="entry name" value="EIF4A_DEADc"/>
</dbReference>
<dbReference type="InterPro" id="IPR014001">
    <property type="entry name" value="Helicase_ATP-bd"/>
</dbReference>
<dbReference type="InterPro" id="IPR001650">
    <property type="entry name" value="Helicase_C-like"/>
</dbReference>
<dbReference type="InterPro" id="IPR027417">
    <property type="entry name" value="P-loop_NTPase"/>
</dbReference>
<dbReference type="InterPro" id="IPR000629">
    <property type="entry name" value="RNA-helicase_DEAD-box_CS"/>
</dbReference>
<dbReference type="InterPro" id="IPR014014">
    <property type="entry name" value="RNA_helicase_DEAD_Q_motif"/>
</dbReference>
<dbReference type="PANTHER" id="PTHR47958">
    <property type="entry name" value="ATP-DEPENDENT RNA HELICASE DBP3"/>
    <property type="match status" value="1"/>
</dbReference>
<dbReference type="Pfam" id="PF00270">
    <property type="entry name" value="DEAD"/>
    <property type="match status" value="1"/>
</dbReference>
<dbReference type="Pfam" id="PF00271">
    <property type="entry name" value="Helicase_C"/>
    <property type="match status" value="1"/>
</dbReference>
<dbReference type="SMART" id="SM00487">
    <property type="entry name" value="DEXDc"/>
    <property type="match status" value="1"/>
</dbReference>
<dbReference type="SMART" id="SM00490">
    <property type="entry name" value="HELICc"/>
    <property type="match status" value="1"/>
</dbReference>
<dbReference type="SUPFAM" id="SSF52540">
    <property type="entry name" value="P-loop containing nucleoside triphosphate hydrolases"/>
    <property type="match status" value="1"/>
</dbReference>
<dbReference type="PROSITE" id="PS00039">
    <property type="entry name" value="DEAD_ATP_HELICASE"/>
    <property type="match status" value="1"/>
</dbReference>
<dbReference type="PROSITE" id="PS51192">
    <property type="entry name" value="HELICASE_ATP_BIND_1"/>
    <property type="match status" value="1"/>
</dbReference>
<dbReference type="PROSITE" id="PS51194">
    <property type="entry name" value="HELICASE_CTER"/>
    <property type="match status" value="1"/>
</dbReference>
<dbReference type="PROSITE" id="PS51195">
    <property type="entry name" value="Q_MOTIF"/>
    <property type="match status" value="1"/>
</dbReference>